<accession>B9KEE8</accession>
<gene>
    <name evidence="1" type="primary">rpmC</name>
    <name type="ordered locus">Cla_0067</name>
</gene>
<reference key="1">
    <citation type="journal article" date="2008" name="Foodborne Pathog. Dis.">
        <title>The complete genome sequence and analysis of the human pathogen Campylobacter lari.</title>
        <authorList>
            <person name="Miller W.G."/>
            <person name="Wang G."/>
            <person name="Binnewies T.T."/>
            <person name="Parker C.T."/>
        </authorList>
    </citation>
    <scope>NUCLEOTIDE SEQUENCE [LARGE SCALE GENOMIC DNA]</scope>
    <source>
        <strain>RM2100 / D67 / ATCC BAA-1060</strain>
    </source>
</reference>
<organism>
    <name type="scientific">Campylobacter lari (strain RM2100 / D67 / ATCC BAA-1060)</name>
    <dbReference type="NCBI Taxonomy" id="306263"/>
    <lineage>
        <taxon>Bacteria</taxon>
        <taxon>Pseudomonadati</taxon>
        <taxon>Campylobacterota</taxon>
        <taxon>Epsilonproteobacteria</taxon>
        <taxon>Campylobacterales</taxon>
        <taxon>Campylobacteraceae</taxon>
        <taxon>Campylobacter</taxon>
    </lineage>
</organism>
<comment type="similarity">
    <text evidence="1">Belongs to the universal ribosomal protein uL29 family.</text>
</comment>
<dbReference type="EMBL" id="CP000932">
    <property type="protein sequence ID" value="ACM63433.1"/>
    <property type="molecule type" value="Genomic_DNA"/>
</dbReference>
<dbReference type="RefSeq" id="WP_012660819.1">
    <property type="nucleotide sequence ID" value="NC_012039.1"/>
</dbReference>
<dbReference type="SMR" id="B9KEE8"/>
<dbReference type="STRING" id="306263.Cla_0067"/>
<dbReference type="GeneID" id="93004162"/>
<dbReference type="KEGG" id="cla:CLA_0067"/>
<dbReference type="eggNOG" id="COG0255">
    <property type="taxonomic scope" value="Bacteria"/>
</dbReference>
<dbReference type="HOGENOM" id="CLU_158491_7_1_7"/>
<dbReference type="Proteomes" id="UP000007727">
    <property type="component" value="Chromosome"/>
</dbReference>
<dbReference type="GO" id="GO:1990904">
    <property type="term" value="C:ribonucleoprotein complex"/>
    <property type="evidence" value="ECO:0007669"/>
    <property type="project" value="UniProtKB-KW"/>
</dbReference>
<dbReference type="GO" id="GO:0005840">
    <property type="term" value="C:ribosome"/>
    <property type="evidence" value="ECO:0007669"/>
    <property type="project" value="UniProtKB-KW"/>
</dbReference>
<dbReference type="GO" id="GO:0003735">
    <property type="term" value="F:structural constituent of ribosome"/>
    <property type="evidence" value="ECO:0007669"/>
    <property type="project" value="InterPro"/>
</dbReference>
<dbReference type="GO" id="GO:0006412">
    <property type="term" value="P:translation"/>
    <property type="evidence" value="ECO:0007669"/>
    <property type="project" value="UniProtKB-UniRule"/>
</dbReference>
<dbReference type="CDD" id="cd00427">
    <property type="entry name" value="Ribosomal_L29_HIP"/>
    <property type="match status" value="1"/>
</dbReference>
<dbReference type="FunFam" id="1.10.287.310:FF:000007">
    <property type="entry name" value="50S ribosomal protein L29"/>
    <property type="match status" value="1"/>
</dbReference>
<dbReference type="Gene3D" id="1.10.287.310">
    <property type="match status" value="1"/>
</dbReference>
<dbReference type="HAMAP" id="MF_00374">
    <property type="entry name" value="Ribosomal_uL29"/>
    <property type="match status" value="1"/>
</dbReference>
<dbReference type="InterPro" id="IPR001854">
    <property type="entry name" value="Ribosomal_uL29"/>
</dbReference>
<dbReference type="InterPro" id="IPR018254">
    <property type="entry name" value="Ribosomal_uL29_CS"/>
</dbReference>
<dbReference type="InterPro" id="IPR036049">
    <property type="entry name" value="Ribosomal_uL29_sf"/>
</dbReference>
<dbReference type="NCBIfam" id="TIGR00012">
    <property type="entry name" value="L29"/>
    <property type="match status" value="1"/>
</dbReference>
<dbReference type="Pfam" id="PF00831">
    <property type="entry name" value="Ribosomal_L29"/>
    <property type="match status" value="1"/>
</dbReference>
<dbReference type="SUPFAM" id="SSF46561">
    <property type="entry name" value="Ribosomal protein L29 (L29p)"/>
    <property type="match status" value="1"/>
</dbReference>
<dbReference type="PROSITE" id="PS00579">
    <property type="entry name" value="RIBOSOMAL_L29"/>
    <property type="match status" value="1"/>
</dbReference>
<name>RL29_CAMLR</name>
<feature type="chain" id="PRO_1000194002" description="Large ribosomal subunit protein uL29">
    <location>
        <begin position="1"/>
        <end position="61"/>
    </location>
</feature>
<evidence type="ECO:0000255" key="1">
    <source>
        <dbReference type="HAMAP-Rule" id="MF_00374"/>
    </source>
</evidence>
<evidence type="ECO:0000305" key="2"/>
<protein>
    <recommendedName>
        <fullName evidence="1">Large ribosomal subunit protein uL29</fullName>
    </recommendedName>
    <alternativeName>
        <fullName evidence="2">50S ribosomal protein L29</fullName>
    </alternativeName>
</protein>
<sequence length="61" mass="6993">MKYTEIKDKTAGELATMLKEKKVLLFTLRQKLKTMQLTNPKEISEVKKDIARINTAISALK</sequence>
<keyword id="KW-1185">Reference proteome</keyword>
<keyword id="KW-0687">Ribonucleoprotein</keyword>
<keyword id="KW-0689">Ribosomal protein</keyword>
<proteinExistence type="inferred from homology"/>